<sequence length="132" mass="15244">MGRDTIADIITSIRNADMDKKGTVRIASTNITETIVKILLREGFIENVRKHRENDQFFLVSTLRHRRNRKGPYRTILKRISRPGLRIYSNYQRIPRILGGMGIVILSTSRGIMTDREARLEGIGGEILCYIW</sequence>
<name>RR8_NANDO</name>
<evidence type="ECO:0000250" key="1"/>
<evidence type="ECO:0000305" key="2"/>
<proteinExistence type="inferred from homology"/>
<comment type="function">
    <text evidence="1">One of the primary rRNA binding proteins, it binds directly to 16S rRNA central domain where it helps coordinate assembly of the platform of the 30S subunit.</text>
</comment>
<comment type="subunit">
    <text evidence="1">Part of the 30S ribosomal subunit.</text>
</comment>
<comment type="subcellular location">
    <subcellularLocation>
        <location>Plastid</location>
        <location>Chloroplast</location>
    </subcellularLocation>
</comment>
<comment type="similarity">
    <text evidence="2">Belongs to the universal ribosomal protein uS8 family.</text>
</comment>
<keyword id="KW-0150">Chloroplast</keyword>
<keyword id="KW-0934">Plastid</keyword>
<keyword id="KW-0687">Ribonucleoprotein</keyword>
<keyword id="KW-0689">Ribosomal protein</keyword>
<keyword id="KW-0694">RNA-binding</keyword>
<keyword id="KW-0699">rRNA-binding</keyword>
<protein>
    <recommendedName>
        <fullName evidence="2">Small ribosomal subunit protein uS8c</fullName>
    </recommendedName>
    <alternativeName>
        <fullName>30S ribosomal protein S8, chloroplastic</fullName>
    </alternativeName>
</protein>
<geneLocation type="chloroplast"/>
<gene>
    <name type="primary">rps8</name>
</gene>
<organism>
    <name type="scientific">Nandina domestica</name>
    <name type="common">Heavenly bamboo</name>
    <dbReference type="NCBI Taxonomy" id="41776"/>
    <lineage>
        <taxon>Eukaryota</taxon>
        <taxon>Viridiplantae</taxon>
        <taxon>Streptophyta</taxon>
        <taxon>Embryophyta</taxon>
        <taxon>Tracheophyta</taxon>
        <taxon>Spermatophyta</taxon>
        <taxon>Magnoliopsida</taxon>
        <taxon>Ranunculales</taxon>
        <taxon>Berberidaceae</taxon>
        <taxon>Nandinoideae</taxon>
        <taxon>Nandineae</taxon>
        <taxon>Nandina</taxon>
    </lineage>
</organism>
<feature type="chain" id="PRO_0000290985" description="Small ribosomal subunit protein uS8c">
    <location>
        <begin position="1"/>
        <end position="132"/>
    </location>
</feature>
<accession>Q09FS5</accession>
<reference key="1">
    <citation type="journal article" date="2006" name="BMC Plant Biol.">
        <title>Rapid and accurate pyrosequencing of angiosperm plastid genomes.</title>
        <authorList>
            <person name="Moore M.J."/>
            <person name="Dhingra A."/>
            <person name="Soltis P.S."/>
            <person name="Shaw R."/>
            <person name="Farmerie W.G."/>
            <person name="Folta K.M."/>
            <person name="Soltis D.E."/>
        </authorList>
    </citation>
    <scope>NUCLEOTIDE SEQUENCE [LARGE SCALE GENOMIC DNA]</scope>
</reference>
<dbReference type="EMBL" id="DQ923117">
    <property type="protein sequence ID" value="ABI49900.1"/>
    <property type="molecule type" value="Genomic_DNA"/>
</dbReference>
<dbReference type="RefSeq" id="YP_740686.1">
    <property type="nucleotide sequence ID" value="NC_008336.1"/>
</dbReference>
<dbReference type="SMR" id="Q09FS5"/>
<dbReference type="GeneID" id="4271697"/>
<dbReference type="GO" id="GO:0009507">
    <property type="term" value="C:chloroplast"/>
    <property type="evidence" value="ECO:0007669"/>
    <property type="project" value="UniProtKB-SubCell"/>
</dbReference>
<dbReference type="GO" id="GO:1990904">
    <property type="term" value="C:ribonucleoprotein complex"/>
    <property type="evidence" value="ECO:0007669"/>
    <property type="project" value="UniProtKB-KW"/>
</dbReference>
<dbReference type="GO" id="GO:0005840">
    <property type="term" value="C:ribosome"/>
    <property type="evidence" value="ECO:0007669"/>
    <property type="project" value="UniProtKB-KW"/>
</dbReference>
<dbReference type="GO" id="GO:0019843">
    <property type="term" value="F:rRNA binding"/>
    <property type="evidence" value="ECO:0007669"/>
    <property type="project" value="UniProtKB-UniRule"/>
</dbReference>
<dbReference type="GO" id="GO:0003735">
    <property type="term" value="F:structural constituent of ribosome"/>
    <property type="evidence" value="ECO:0007669"/>
    <property type="project" value="InterPro"/>
</dbReference>
<dbReference type="GO" id="GO:0006412">
    <property type="term" value="P:translation"/>
    <property type="evidence" value="ECO:0007669"/>
    <property type="project" value="UniProtKB-UniRule"/>
</dbReference>
<dbReference type="FunFam" id="3.30.1490.10:FF:000001">
    <property type="entry name" value="30S ribosomal protein S8"/>
    <property type="match status" value="1"/>
</dbReference>
<dbReference type="FunFam" id="3.30.1370.30:FF:000004">
    <property type="entry name" value="30S ribosomal protein S8, chloroplastic"/>
    <property type="match status" value="1"/>
</dbReference>
<dbReference type="Gene3D" id="3.30.1370.30">
    <property type="match status" value="1"/>
</dbReference>
<dbReference type="Gene3D" id="3.30.1490.10">
    <property type="match status" value="1"/>
</dbReference>
<dbReference type="HAMAP" id="MF_01302_B">
    <property type="entry name" value="Ribosomal_uS8_B"/>
    <property type="match status" value="1"/>
</dbReference>
<dbReference type="InterPro" id="IPR000630">
    <property type="entry name" value="Ribosomal_uS8"/>
</dbReference>
<dbReference type="InterPro" id="IPR047863">
    <property type="entry name" value="Ribosomal_uS8_CS"/>
</dbReference>
<dbReference type="InterPro" id="IPR035987">
    <property type="entry name" value="Ribosomal_uS8_sf"/>
</dbReference>
<dbReference type="NCBIfam" id="NF001109">
    <property type="entry name" value="PRK00136.1"/>
    <property type="match status" value="1"/>
</dbReference>
<dbReference type="PANTHER" id="PTHR11758">
    <property type="entry name" value="40S RIBOSOMAL PROTEIN S15A"/>
    <property type="match status" value="1"/>
</dbReference>
<dbReference type="Pfam" id="PF00410">
    <property type="entry name" value="Ribosomal_S8"/>
    <property type="match status" value="1"/>
</dbReference>
<dbReference type="SUPFAM" id="SSF56047">
    <property type="entry name" value="Ribosomal protein S8"/>
    <property type="match status" value="1"/>
</dbReference>
<dbReference type="PROSITE" id="PS00053">
    <property type="entry name" value="RIBOSOMAL_S8"/>
    <property type="match status" value="1"/>
</dbReference>